<reference key="1">
    <citation type="journal article" date="1994" name="J. Biol. Chem.">
        <title>Molecular cloning and characterization of a novel beta-adrenergic receptor.</title>
        <authorList>
            <person name="Chen X.-H."/>
            <person name="Harden T.K."/>
            <person name="Nicholas R.A."/>
        </authorList>
    </citation>
    <scope>NUCLEOTIDE SEQUENCE [GENOMIC DNA / MRNA]</scope>
</reference>
<proteinExistence type="evidence at transcript level"/>
<protein>
    <recommendedName>
        <fullName>Beta-4C adrenergic receptor</fullName>
    </recommendedName>
    <alternativeName>
        <fullName>Beta-4C adrenoreceptor</fullName>
        <shortName>Beta-4C adrenoceptor</shortName>
    </alternativeName>
</protein>
<comment type="function">
    <text>Beta-adrenergic receptors mediate the catecholamine-induced activation of adenylate cyclase through the action of G proteins.</text>
</comment>
<comment type="subcellular location">
    <subcellularLocation>
        <location>Cell membrane</location>
        <topology>Multi-pass membrane protein</topology>
    </subcellularLocation>
</comment>
<comment type="tissue specificity">
    <text>Broad tissue distribution.</text>
</comment>
<comment type="similarity">
    <text evidence="3">Belongs to the G-protein coupled receptor 1 family. Adrenergic receptor subfamily. ADRB4C sub-subfamily.</text>
</comment>
<organism>
    <name type="scientific">Meleagris gallopavo</name>
    <name type="common">Wild turkey</name>
    <dbReference type="NCBI Taxonomy" id="9103"/>
    <lineage>
        <taxon>Eukaryota</taxon>
        <taxon>Metazoa</taxon>
        <taxon>Chordata</taxon>
        <taxon>Craniata</taxon>
        <taxon>Vertebrata</taxon>
        <taxon>Euteleostomi</taxon>
        <taxon>Archelosauria</taxon>
        <taxon>Archosauria</taxon>
        <taxon>Dinosauria</taxon>
        <taxon>Saurischia</taxon>
        <taxon>Theropoda</taxon>
        <taxon>Coelurosauria</taxon>
        <taxon>Aves</taxon>
        <taxon>Neognathae</taxon>
        <taxon>Galloanserae</taxon>
        <taxon>Galliformes</taxon>
        <taxon>Phasianidae</taxon>
        <taxon>Meleagridinae</taxon>
        <taxon>Meleagris</taxon>
    </lineage>
</organism>
<accession>P43141</accession>
<dbReference type="EMBL" id="U13977">
    <property type="protein sequence ID" value="AAA62150.1"/>
    <property type="molecule type" value="mRNA"/>
</dbReference>
<dbReference type="EMBL" id="U13978">
    <property type="protein sequence ID" value="AAA62151.1"/>
    <property type="molecule type" value="Genomic_DNA"/>
</dbReference>
<dbReference type="PIR" id="A55044">
    <property type="entry name" value="A55044"/>
</dbReference>
<dbReference type="RefSeq" id="NP_001290112.1">
    <property type="nucleotide sequence ID" value="NM_001303183.1"/>
</dbReference>
<dbReference type="SMR" id="P43141"/>
<dbReference type="GlyCosmos" id="P43141">
    <property type="glycosylation" value="2 sites, No reported glycans"/>
</dbReference>
<dbReference type="GeneID" id="100379211"/>
<dbReference type="KEGG" id="mgp:100379211"/>
<dbReference type="CTD" id="155"/>
<dbReference type="InParanoid" id="P43141"/>
<dbReference type="OrthoDB" id="5983033at2759"/>
<dbReference type="Proteomes" id="UP000001645">
    <property type="component" value="Unplaced"/>
</dbReference>
<dbReference type="GO" id="GO:0005886">
    <property type="term" value="C:plasma membrane"/>
    <property type="evidence" value="ECO:0007669"/>
    <property type="project" value="UniProtKB-SubCell"/>
</dbReference>
<dbReference type="GO" id="GO:0004940">
    <property type="term" value="F:beta1-adrenergic receptor activity"/>
    <property type="evidence" value="ECO:0007669"/>
    <property type="project" value="InterPro"/>
</dbReference>
<dbReference type="GO" id="GO:0015052">
    <property type="term" value="F:beta3-adrenergic receptor activity"/>
    <property type="evidence" value="ECO:0007669"/>
    <property type="project" value="TreeGrafter"/>
</dbReference>
<dbReference type="GO" id="GO:0051379">
    <property type="term" value="F:epinephrine binding"/>
    <property type="evidence" value="ECO:0007669"/>
    <property type="project" value="TreeGrafter"/>
</dbReference>
<dbReference type="GO" id="GO:0071880">
    <property type="term" value="P:adenylate cyclase-activating adrenergic receptor signaling pathway"/>
    <property type="evidence" value="ECO:0007669"/>
    <property type="project" value="TreeGrafter"/>
</dbReference>
<dbReference type="GO" id="GO:0002025">
    <property type="term" value="P:norepinephrine-epinephrine-mediated vasodilation involved in regulation of systemic arterial blood pressure"/>
    <property type="evidence" value="ECO:0007669"/>
    <property type="project" value="TreeGrafter"/>
</dbReference>
<dbReference type="GO" id="GO:0045823">
    <property type="term" value="P:positive regulation of heart contraction"/>
    <property type="evidence" value="ECO:0007669"/>
    <property type="project" value="InterPro"/>
</dbReference>
<dbReference type="GO" id="GO:0043410">
    <property type="term" value="P:positive regulation of MAPK cascade"/>
    <property type="evidence" value="ECO:0007669"/>
    <property type="project" value="TreeGrafter"/>
</dbReference>
<dbReference type="CDD" id="cd15959">
    <property type="entry name" value="7tmA_Beta3_AR"/>
    <property type="match status" value="1"/>
</dbReference>
<dbReference type="FunFam" id="1.20.1070.10:FF:000057">
    <property type="entry name" value="Beta-1 adrenergic receptor"/>
    <property type="match status" value="1"/>
</dbReference>
<dbReference type="Gene3D" id="1.20.1070.10">
    <property type="entry name" value="Rhodopsin 7-helix transmembrane proteins"/>
    <property type="match status" value="1"/>
</dbReference>
<dbReference type="InterPro" id="IPR002233">
    <property type="entry name" value="ADR_fam"/>
</dbReference>
<dbReference type="InterPro" id="IPR000507">
    <property type="entry name" value="ADRB1_rcpt"/>
</dbReference>
<dbReference type="InterPro" id="IPR000276">
    <property type="entry name" value="GPCR_Rhodpsn"/>
</dbReference>
<dbReference type="InterPro" id="IPR017452">
    <property type="entry name" value="GPCR_Rhodpsn_7TM"/>
</dbReference>
<dbReference type="PANTHER" id="PTHR24248">
    <property type="entry name" value="ADRENERGIC RECEPTOR-RELATED G-PROTEIN COUPLED RECEPTOR"/>
    <property type="match status" value="1"/>
</dbReference>
<dbReference type="PANTHER" id="PTHR24248:SF3">
    <property type="entry name" value="BETA-3 ADRENERGIC RECEPTOR"/>
    <property type="match status" value="1"/>
</dbReference>
<dbReference type="Pfam" id="PF00001">
    <property type="entry name" value="7tm_1"/>
    <property type="match status" value="1"/>
</dbReference>
<dbReference type="PRINTS" id="PR01103">
    <property type="entry name" value="ADRENERGICR"/>
</dbReference>
<dbReference type="PRINTS" id="PR00561">
    <property type="entry name" value="ADRENRGCB1AR"/>
</dbReference>
<dbReference type="PRINTS" id="PR00237">
    <property type="entry name" value="GPCRRHODOPSN"/>
</dbReference>
<dbReference type="SMART" id="SM01381">
    <property type="entry name" value="7TM_GPCR_Srsx"/>
    <property type="match status" value="1"/>
</dbReference>
<dbReference type="SUPFAM" id="SSF81321">
    <property type="entry name" value="Family A G protein-coupled receptor-like"/>
    <property type="match status" value="1"/>
</dbReference>
<dbReference type="PROSITE" id="PS00237">
    <property type="entry name" value="G_PROTEIN_RECEP_F1_1"/>
    <property type="match status" value="1"/>
</dbReference>
<dbReference type="PROSITE" id="PS50262">
    <property type="entry name" value="G_PROTEIN_RECEP_F1_2"/>
    <property type="match status" value="1"/>
</dbReference>
<gene>
    <name type="primary">ADRB4C</name>
</gene>
<keyword id="KW-1003">Cell membrane</keyword>
<keyword id="KW-1015">Disulfide bond</keyword>
<keyword id="KW-0297">G-protein coupled receptor</keyword>
<keyword id="KW-0325">Glycoprotein</keyword>
<keyword id="KW-0449">Lipoprotein</keyword>
<keyword id="KW-0472">Membrane</keyword>
<keyword id="KW-0564">Palmitate</keyword>
<keyword id="KW-0597">Phosphoprotein</keyword>
<keyword id="KW-0675">Receptor</keyword>
<keyword id="KW-1185">Reference proteome</keyword>
<keyword id="KW-0807">Transducer</keyword>
<keyword id="KW-0812">Transmembrane</keyword>
<keyword id="KW-1133">Transmembrane helix</keyword>
<evidence type="ECO:0000250" key="1"/>
<evidence type="ECO:0000255" key="2"/>
<evidence type="ECO:0000255" key="3">
    <source>
        <dbReference type="PROSITE-ProRule" id="PRU00521"/>
    </source>
</evidence>
<evidence type="ECO:0000256" key="4">
    <source>
        <dbReference type="SAM" id="MobiDB-lite"/>
    </source>
</evidence>
<name>ADB4C_MELGA</name>
<feature type="chain" id="PRO_0000069111" description="Beta-4C adrenergic receptor">
    <location>
        <begin position="1"/>
        <end position="428"/>
    </location>
</feature>
<feature type="topological domain" description="Extracellular" evidence="1">
    <location>
        <begin position="1"/>
        <end position="25"/>
    </location>
</feature>
<feature type="transmembrane region" description="Helical; Name=1" evidence="1">
    <location>
        <begin position="26"/>
        <end position="49"/>
    </location>
</feature>
<feature type="topological domain" description="Cytoplasmic" evidence="1">
    <location>
        <begin position="50"/>
        <end position="58"/>
    </location>
</feature>
<feature type="transmembrane region" description="Helical; Name=2" evidence="1">
    <location>
        <begin position="59"/>
        <end position="77"/>
    </location>
</feature>
<feature type="topological domain" description="Extracellular" evidence="1">
    <location>
        <begin position="78"/>
        <end position="97"/>
    </location>
</feature>
<feature type="transmembrane region" description="Helical; Name=3" evidence="1">
    <location>
        <begin position="98"/>
        <end position="119"/>
    </location>
</feature>
<feature type="topological domain" description="Cytoplasmic" evidence="1">
    <location>
        <begin position="120"/>
        <end position="141"/>
    </location>
</feature>
<feature type="transmembrane region" description="Helical; Name=4" evidence="1">
    <location>
        <begin position="142"/>
        <end position="164"/>
    </location>
</feature>
<feature type="topological domain" description="Extracellular" evidence="1">
    <location>
        <begin position="165"/>
        <end position="189"/>
    </location>
</feature>
<feature type="transmembrane region" description="Helical; Name=5" evidence="1">
    <location>
        <begin position="190"/>
        <end position="211"/>
    </location>
</feature>
<feature type="topological domain" description="Cytoplasmic" evidence="1">
    <location>
        <begin position="212"/>
        <end position="261"/>
    </location>
</feature>
<feature type="transmembrane region" description="Helical; Name=6" evidence="1">
    <location>
        <begin position="262"/>
        <end position="283"/>
    </location>
</feature>
<feature type="topological domain" description="Extracellular" evidence="1">
    <location>
        <begin position="284"/>
        <end position="294"/>
    </location>
</feature>
<feature type="transmembrane region" description="Helical; Name=7" evidence="1">
    <location>
        <begin position="295"/>
        <end position="315"/>
    </location>
</feature>
<feature type="topological domain" description="Cytoplasmic" evidence="1">
    <location>
        <begin position="316"/>
        <end position="428"/>
    </location>
</feature>
<feature type="region of interest" description="Disordered" evidence="4">
    <location>
        <begin position="359"/>
        <end position="398"/>
    </location>
</feature>
<feature type="compositionally biased region" description="Basic and acidic residues" evidence="4">
    <location>
        <begin position="359"/>
        <end position="386"/>
    </location>
</feature>
<feature type="lipid moiety-binding region" description="S-palmitoyl cysteine" evidence="1">
    <location>
        <position position="329"/>
    </location>
</feature>
<feature type="glycosylation site" description="N-linked (GlcNAc...) asparagine" evidence="2">
    <location>
        <position position="8"/>
    </location>
</feature>
<feature type="glycosylation site" description="N-linked (GlcNAc...) asparagine" evidence="2">
    <location>
        <position position="13"/>
    </location>
</feature>
<feature type="disulfide bond" evidence="3">
    <location>
        <begin position="96"/>
        <end position="175"/>
    </location>
</feature>
<sequence length="428" mass="47398">MTPLPAGNGSVPNCSWAAVLSRQWAVGAALSITILVIVAGNLLVIVAIAKTPRLQTMTNVFVTSLACADLVMGLLVVPPGATILLSGHWPYGTVVCELWTSLDVLCVTASIETLCAIAVDRYLAITAPLQYEALVTKGRAWAVVCMVWAISAFISFLPIMNHWWRDGADEQAVRCYDDPRCCDFVTNMTYAIVSSTVSFYVPLLVMIFVYVRVFAVATRHVQLIGKDKVRFLQENPSLSSRGGRWRRPSRLLAIKEHKALKTLGIIMGTFTLCWLPFFVANIIKVFCRPLVPDQLFLFLNWLGYVNSAFNPIIYCRSPDFRSAFRKLLCCPRRADRRLHAAPQDPQHCSCAFSPRGDPMEDSKAVDPGHLREDSEVQGSGRREENASSHGGGHQQRPLGECWLQGMQSMLCEQLDEFTSTEMPAGPSV</sequence>